<feature type="chain" id="PRO_1000199923" description="Sulfur carrier protein TusA">
    <location>
        <begin position="1"/>
        <end position="82"/>
    </location>
</feature>
<feature type="active site" description="Cysteine persulfide intermediate" evidence="1">
    <location>
        <position position="17"/>
    </location>
</feature>
<evidence type="ECO:0000255" key="1">
    <source>
        <dbReference type="HAMAP-Rule" id="MF_00413"/>
    </source>
</evidence>
<dbReference type="EMBL" id="CP001321">
    <property type="protein sequence ID" value="ACL33626.1"/>
    <property type="molecule type" value="Genomic_DNA"/>
</dbReference>
<dbReference type="RefSeq" id="WP_005710491.1">
    <property type="nucleotide sequence ID" value="NC_011852.1"/>
</dbReference>
<dbReference type="SMR" id="B8F8H4"/>
<dbReference type="STRING" id="557723.HAPS_2193"/>
<dbReference type="GeneID" id="66619635"/>
<dbReference type="KEGG" id="hap:HAPS_2193"/>
<dbReference type="HOGENOM" id="CLU_165255_5_1_6"/>
<dbReference type="Proteomes" id="UP000006743">
    <property type="component" value="Chromosome"/>
</dbReference>
<dbReference type="GO" id="GO:0005737">
    <property type="term" value="C:cytoplasm"/>
    <property type="evidence" value="ECO:0007669"/>
    <property type="project" value="UniProtKB-SubCell"/>
</dbReference>
<dbReference type="GO" id="GO:0097163">
    <property type="term" value="F:sulfur carrier activity"/>
    <property type="evidence" value="ECO:0007669"/>
    <property type="project" value="UniProtKB-UniRule"/>
</dbReference>
<dbReference type="GO" id="GO:0002143">
    <property type="term" value="P:tRNA wobble position uridine thiolation"/>
    <property type="evidence" value="ECO:0007669"/>
    <property type="project" value="InterPro"/>
</dbReference>
<dbReference type="CDD" id="cd03423">
    <property type="entry name" value="SirA"/>
    <property type="match status" value="1"/>
</dbReference>
<dbReference type="Gene3D" id="3.30.110.40">
    <property type="entry name" value="TusA-like domain"/>
    <property type="match status" value="1"/>
</dbReference>
<dbReference type="HAMAP" id="MF_00413">
    <property type="entry name" value="Thiourid_synth_A"/>
    <property type="match status" value="1"/>
</dbReference>
<dbReference type="InterPro" id="IPR022931">
    <property type="entry name" value="Sulphur_carrier_TusA"/>
</dbReference>
<dbReference type="InterPro" id="IPR001455">
    <property type="entry name" value="TusA-like"/>
</dbReference>
<dbReference type="InterPro" id="IPR036868">
    <property type="entry name" value="TusA-like_sf"/>
</dbReference>
<dbReference type="NCBIfam" id="NF001423">
    <property type="entry name" value="PRK00299.1"/>
    <property type="match status" value="1"/>
</dbReference>
<dbReference type="PANTHER" id="PTHR33279:SF2">
    <property type="entry name" value="SULFUR CARRIER PROTEIN TUSA"/>
    <property type="match status" value="1"/>
</dbReference>
<dbReference type="PANTHER" id="PTHR33279">
    <property type="entry name" value="SULFUR CARRIER PROTEIN YEDF-RELATED"/>
    <property type="match status" value="1"/>
</dbReference>
<dbReference type="Pfam" id="PF01206">
    <property type="entry name" value="TusA"/>
    <property type="match status" value="1"/>
</dbReference>
<dbReference type="SUPFAM" id="SSF64307">
    <property type="entry name" value="SirA-like"/>
    <property type="match status" value="1"/>
</dbReference>
<dbReference type="PROSITE" id="PS01148">
    <property type="entry name" value="UPF0033"/>
    <property type="match status" value="1"/>
</dbReference>
<proteinExistence type="inferred from homology"/>
<name>TUSA_GLAP5</name>
<comment type="function">
    <text evidence="1">Sulfur carrier protein which probably makes part of a sulfur-relay system.</text>
</comment>
<comment type="subcellular location">
    <subcellularLocation>
        <location evidence="1">Cytoplasm</location>
    </subcellularLocation>
</comment>
<comment type="similarity">
    <text evidence="1">Belongs to the sulfur carrier protein TusA family.</text>
</comment>
<protein>
    <recommendedName>
        <fullName evidence="1">Sulfur carrier protein TusA</fullName>
    </recommendedName>
</protein>
<gene>
    <name evidence="1" type="primary">tusA</name>
    <name type="ordered locus">HAPS_2193</name>
</gene>
<keyword id="KW-0963">Cytoplasm</keyword>
<keyword id="KW-1185">Reference proteome</keyword>
<reference key="1">
    <citation type="journal article" date="2009" name="J. Bacteriol.">
        <title>Complete genome sequence of Haemophilus parasuis SH0165.</title>
        <authorList>
            <person name="Yue M."/>
            <person name="Yang F."/>
            <person name="Yang J."/>
            <person name="Bei W."/>
            <person name="Cai X."/>
            <person name="Chen L."/>
            <person name="Dong J."/>
            <person name="Zhou R."/>
            <person name="Jin M."/>
            <person name="Jin Q."/>
            <person name="Chen H."/>
        </authorList>
    </citation>
    <scope>NUCLEOTIDE SEQUENCE [LARGE SCALE GENOMIC DNA]</scope>
    <source>
        <strain>SH0165</strain>
    </source>
</reference>
<accession>B8F8H4</accession>
<organism>
    <name type="scientific">Glaesserella parasuis serovar 5 (strain SH0165)</name>
    <name type="common">Haemophilus parasuis</name>
    <dbReference type="NCBI Taxonomy" id="557723"/>
    <lineage>
        <taxon>Bacteria</taxon>
        <taxon>Pseudomonadati</taxon>
        <taxon>Pseudomonadota</taxon>
        <taxon>Gammaproteobacteria</taxon>
        <taxon>Pasteurellales</taxon>
        <taxon>Pasteurellaceae</taxon>
        <taxon>Glaesserella</taxon>
    </lineage>
</organism>
<sequence>MTELTINHTLDTLGLRCPEPVMLTRKTIRNMADGEVLLIIADDPATTRDIPSFCQFMDHQLLKSQTDTKPYQYWVKKGLDHL</sequence>